<evidence type="ECO:0000255" key="1">
    <source>
        <dbReference type="HAMAP-Rule" id="MF_00462"/>
    </source>
</evidence>
<gene>
    <name evidence="1" type="primary">rnfD</name>
    <name type="ordered locus">VSAL_I1869</name>
</gene>
<feature type="chain" id="PRO_1000191666" description="Ion-translocating oxidoreductase complex subunit D">
    <location>
        <begin position="1"/>
        <end position="351"/>
    </location>
</feature>
<feature type="transmembrane region" description="Helical" evidence="1">
    <location>
        <begin position="37"/>
        <end position="57"/>
    </location>
</feature>
<feature type="transmembrane region" description="Helical" evidence="1">
    <location>
        <begin position="88"/>
        <end position="108"/>
    </location>
</feature>
<feature type="transmembrane region" description="Helical" evidence="1">
    <location>
        <begin position="123"/>
        <end position="143"/>
    </location>
</feature>
<feature type="transmembrane region" description="Helical" evidence="1">
    <location>
        <begin position="214"/>
        <end position="234"/>
    </location>
</feature>
<feature type="transmembrane region" description="Helical" evidence="1">
    <location>
        <begin position="241"/>
        <end position="261"/>
    </location>
</feature>
<feature type="transmembrane region" description="Helical" evidence="1">
    <location>
        <begin position="270"/>
        <end position="290"/>
    </location>
</feature>
<feature type="transmembrane region" description="Helical" evidence="1">
    <location>
        <begin position="300"/>
        <end position="317"/>
    </location>
</feature>
<feature type="modified residue" description="FMN phosphoryl threonine" evidence="1">
    <location>
        <position position="187"/>
    </location>
</feature>
<dbReference type="EC" id="7.-.-.-" evidence="1"/>
<dbReference type="EMBL" id="FM178379">
    <property type="protein sequence ID" value="CAQ79554.1"/>
    <property type="molecule type" value="Genomic_DNA"/>
</dbReference>
<dbReference type="SMR" id="B6EGH4"/>
<dbReference type="KEGG" id="vsa:VSAL_I1869"/>
<dbReference type="eggNOG" id="COG4658">
    <property type="taxonomic scope" value="Bacteria"/>
</dbReference>
<dbReference type="HOGENOM" id="CLU_042020_0_0_6"/>
<dbReference type="Proteomes" id="UP000001730">
    <property type="component" value="Chromosome 1"/>
</dbReference>
<dbReference type="GO" id="GO:0005886">
    <property type="term" value="C:plasma membrane"/>
    <property type="evidence" value="ECO:0007669"/>
    <property type="project" value="UniProtKB-SubCell"/>
</dbReference>
<dbReference type="GO" id="GO:0022900">
    <property type="term" value="P:electron transport chain"/>
    <property type="evidence" value="ECO:0007669"/>
    <property type="project" value="UniProtKB-UniRule"/>
</dbReference>
<dbReference type="GO" id="GO:0055085">
    <property type="term" value="P:transmembrane transport"/>
    <property type="evidence" value="ECO:0007669"/>
    <property type="project" value="InterPro"/>
</dbReference>
<dbReference type="HAMAP" id="MF_00462">
    <property type="entry name" value="RsxD_RnfD"/>
    <property type="match status" value="1"/>
</dbReference>
<dbReference type="InterPro" id="IPR004338">
    <property type="entry name" value="NqrB/RnfD"/>
</dbReference>
<dbReference type="InterPro" id="IPR011303">
    <property type="entry name" value="RnfD_bac"/>
</dbReference>
<dbReference type="NCBIfam" id="NF002011">
    <property type="entry name" value="PRK00816.1"/>
    <property type="match status" value="1"/>
</dbReference>
<dbReference type="NCBIfam" id="TIGR01946">
    <property type="entry name" value="rnfD"/>
    <property type="match status" value="1"/>
</dbReference>
<dbReference type="PANTHER" id="PTHR30578">
    <property type="entry name" value="ELECTRON TRANSPORT COMPLEX PROTEIN RNFD"/>
    <property type="match status" value="1"/>
</dbReference>
<dbReference type="PANTHER" id="PTHR30578:SF0">
    <property type="entry name" value="ION-TRANSLOCATING OXIDOREDUCTASE COMPLEX SUBUNIT D"/>
    <property type="match status" value="1"/>
</dbReference>
<dbReference type="Pfam" id="PF03116">
    <property type="entry name" value="NQR2_RnfD_RnfE"/>
    <property type="match status" value="1"/>
</dbReference>
<sequence length="351" mass="38331">MAFFITSSPHAHSKKSTQTMMKMVALATIPGLLAQTYFFGWGTLLQVLLAIITAILAEAFVLKCRKRPLAPYLKDNSALLTGLLLALAIPPLSPWWLTVIGVFFAIVIAKHLYGGLGQNLFNPAMAAYVVLLISFPVQMTTWLPAKELLVEHISFMDSVWLIFHGLSQDGFSVHQLTMNVDGMTMATPLDTVKTGLKAGLTTNEILSAPIFNGFAGLGWLWVNVGFLLGGLFLLQQRLIHWHIPVSFLASLFIVSSLFAVFSPDTTTSPIFNLFSGATMLGAFFIATDPVSAATTNKGRLYYGALIGLLVYMIRSWGGFPDGVAFAVLLANMCVPLIDYYTKPRTYGHKKG</sequence>
<keyword id="KW-0997">Cell inner membrane</keyword>
<keyword id="KW-1003">Cell membrane</keyword>
<keyword id="KW-0249">Electron transport</keyword>
<keyword id="KW-0285">Flavoprotein</keyword>
<keyword id="KW-0288">FMN</keyword>
<keyword id="KW-0472">Membrane</keyword>
<keyword id="KW-0597">Phosphoprotein</keyword>
<keyword id="KW-1278">Translocase</keyword>
<keyword id="KW-0812">Transmembrane</keyword>
<keyword id="KW-1133">Transmembrane helix</keyword>
<keyword id="KW-0813">Transport</keyword>
<name>RNFD_ALISL</name>
<reference key="1">
    <citation type="journal article" date="2008" name="BMC Genomics">
        <title>The genome sequence of the fish pathogen Aliivibrio salmonicida strain LFI1238 shows extensive evidence of gene decay.</title>
        <authorList>
            <person name="Hjerde E."/>
            <person name="Lorentzen M.S."/>
            <person name="Holden M.T."/>
            <person name="Seeger K."/>
            <person name="Paulsen S."/>
            <person name="Bason N."/>
            <person name="Churcher C."/>
            <person name="Harris D."/>
            <person name="Norbertczak H."/>
            <person name="Quail M.A."/>
            <person name="Sanders S."/>
            <person name="Thurston S."/>
            <person name="Parkhill J."/>
            <person name="Willassen N.P."/>
            <person name="Thomson N.R."/>
        </authorList>
    </citation>
    <scope>NUCLEOTIDE SEQUENCE [LARGE SCALE GENOMIC DNA]</scope>
    <source>
        <strain>LFI1238</strain>
    </source>
</reference>
<comment type="function">
    <text evidence="1">Part of a membrane-bound complex that couples electron transfer with translocation of ions across the membrane.</text>
</comment>
<comment type="cofactor">
    <cofactor evidence="1">
        <name>FMN</name>
        <dbReference type="ChEBI" id="CHEBI:58210"/>
    </cofactor>
</comment>
<comment type="subunit">
    <text evidence="1">The complex is composed of six subunits: RnfA, RnfB, RnfC, RnfD, RnfE and RnfG.</text>
</comment>
<comment type="subcellular location">
    <subcellularLocation>
        <location evidence="1">Cell inner membrane</location>
        <topology evidence="1">Multi-pass membrane protein</topology>
    </subcellularLocation>
</comment>
<comment type="similarity">
    <text evidence="1">Belongs to the NqrB/RnfD family.</text>
</comment>
<accession>B6EGH4</accession>
<proteinExistence type="inferred from homology"/>
<protein>
    <recommendedName>
        <fullName evidence="1">Ion-translocating oxidoreductase complex subunit D</fullName>
        <ecNumber evidence="1">7.-.-.-</ecNumber>
    </recommendedName>
    <alternativeName>
        <fullName evidence="1">Rnf electron transport complex subunit D</fullName>
    </alternativeName>
</protein>
<organism>
    <name type="scientific">Aliivibrio salmonicida (strain LFI1238)</name>
    <name type="common">Vibrio salmonicida (strain LFI1238)</name>
    <dbReference type="NCBI Taxonomy" id="316275"/>
    <lineage>
        <taxon>Bacteria</taxon>
        <taxon>Pseudomonadati</taxon>
        <taxon>Pseudomonadota</taxon>
        <taxon>Gammaproteobacteria</taxon>
        <taxon>Vibrionales</taxon>
        <taxon>Vibrionaceae</taxon>
        <taxon>Aliivibrio</taxon>
    </lineage>
</organism>